<evidence type="ECO:0000305" key="1"/>
<keyword id="KW-0903">Direct protein sequencing</keyword>
<proteinExistence type="evidence at protein level"/>
<protein>
    <recommendedName>
        <fullName>Unknown protein NF003 from 2D-PAGE</fullName>
    </recommendedName>
</protein>
<organism evidence="1">
    <name type="scientific">Naegleria fowleri</name>
    <name type="common">Brain eating amoeba</name>
    <dbReference type="NCBI Taxonomy" id="5763"/>
    <lineage>
        <taxon>Eukaryota</taxon>
        <taxon>Discoba</taxon>
        <taxon>Heterolobosea</taxon>
        <taxon>Tetramitia</taxon>
        <taxon>Eutetramitia</taxon>
        <taxon>Vahlkampfiidae</taxon>
        <taxon>Naegleria</taxon>
    </lineage>
</organism>
<sequence length="20" mass="2253">YAELKAILAKQIPEKQAXIN</sequence>
<comment type="miscellaneous">
    <text evidence="1">On the 2D-gel the determined pI of this protein is: 7.1, its MW is: 46.4 kDa.</text>
</comment>
<feature type="chain" id="PRO_0000055485" description="Unknown protein NF003 from 2D-PAGE">
    <location>
        <begin position="1"/>
        <end position="20" status="greater than"/>
    </location>
</feature>
<feature type="non-terminal residue" evidence="1">
    <location>
        <position position="20"/>
    </location>
</feature>
<name>NF03_NAEFO</name>
<reference evidence="1" key="1">
    <citation type="submission" date="2004-04" db="UniProtKB">
        <title>Comparative study of protein profiles on pathogenic and nonpathogenic Naegleria species by 2D-PAGE.</title>
        <authorList>
            <person name="Omura M."/>
            <person name="Furushima-Shimogawara R."/>
            <person name="Izumiyama S."/>
            <person name="Endo T."/>
        </authorList>
    </citation>
    <scope>PROTEIN SEQUENCE</scope>
    <source>
        <strain evidence="1">ATCC 30214 / Nf 66</strain>
    </source>
</reference>
<accession>P83898</accession>